<feature type="chain" id="PRO_1000090273" description="Holliday junction branch migration complex subunit RuvA">
    <location>
        <begin position="1"/>
        <end position="199"/>
    </location>
</feature>
<feature type="region of interest" description="Domain I" evidence="1">
    <location>
        <begin position="1"/>
        <end position="63"/>
    </location>
</feature>
<feature type="region of interest" description="Domain II" evidence="1">
    <location>
        <begin position="64"/>
        <end position="142"/>
    </location>
</feature>
<feature type="region of interest" description="Flexible linker" evidence="1">
    <location>
        <begin position="143"/>
        <end position="150"/>
    </location>
</feature>
<feature type="region of interest" description="Domain III" evidence="1">
    <location>
        <begin position="150"/>
        <end position="199"/>
    </location>
</feature>
<reference key="1">
    <citation type="journal article" date="2008" name="PLoS ONE">
        <title>Comparative analysis of Acinetobacters: three genomes for three lifestyles.</title>
        <authorList>
            <person name="Vallenet D."/>
            <person name="Nordmann P."/>
            <person name="Barbe V."/>
            <person name="Poirel L."/>
            <person name="Mangenot S."/>
            <person name="Bataille E."/>
            <person name="Dossat C."/>
            <person name="Gas S."/>
            <person name="Kreimeyer A."/>
            <person name="Lenoble P."/>
            <person name="Oztas S."/>
            <person name="Poulain J."/>
            <person name="Segurens B."/>
            <person name="Robert C."/>
            <person name="Abergel C."/>
            <person name="Claverie J.-M."/>
            <person name="Raoult D."/>
            <person name="Medigue C."/>
            <person name="Weissenbach J."/>
            <person name="Cruveiller S."/>
        </authorList>
    </citation>
    <scope>NUCLEOTIDE SEQUENCE [LARGE SCALE GENOMIC DNA]</scope>
    <source>
        <strain>AYE</strain>
    </source>
</reference>
<organism>
    <name type="scientific">Acinetobacter baumannii (strain AYE)</name>
    <dbReference type="NCBI Taxonomy" id="509173"/>
    <lineage>
        <taxon>Bacteria</taxon>
        <taxon>Pseudomonadati</taxon>
        <taxon>Pseudomonadota</taxon>
        <taxon>Gammaproteobacteria</taxon>
        <taxon>Moraxellales</taxon>
        <taxon>Moraxellaceae</taxon>
        <taxon>Acinetobacter</taxon>
        <taxon>Acinetobacter calcoaceticus/baumannii complex</taxon>
    </lineage>
</organism>
<accession>B0VDI6</accession>
<comment type="function">
    <text evidence="1">The RuvA-RuvB-RuvC complex processes Holliday junction (HJ) DNA during genetic recombination and DNA repair, while the RuvA-RuvB complex plays an important role in the rescue of blocked DNA replication forks via replication fork reversal (RFR). RuvA specifically binds to HJ cruciform DNA, conferring on it an open structure. The RuvB hexamer acts as an ATP-dependent pump, pulling dsDNA into and through the RuvAB complex. HJ branch migration allows RuvC to scan DNA until it finds its consensus sequence, where it cleaves and resolves the cruciform DNA.</text>
</comment>
<comment type="subunit">
    <text evidence="1">Homotetramer. Forms an RuvA(8)-RuvB(12)-Holliday junction (HJ) complex. HJ DNA is sandwiched between 2 RuvA tetramers; dsDNA enters through RuvA and exits via RuvB. An RuvB hexamer assembles on each DNA strand where it exits the tetramer. Each RuvB hexamer is contacted by two RuvA subunits (via domain III) on 2 adjacent RuvB subunits; this complex drives branch migration. In the full resolvosome a probable DNA-RuvA(4)-RuvB(12)-RuvC(2) complex forms which resolves the HJ.</text>
</comment>
<comment type="subcellular location">
    <subcellularLocation>
        <location evidence="1">Cytoplasm</location>
    </subcellularLocation>
</comment>
<comment type="domain">
    <text evidence="1">Has three domains with a flexible linker between the domains II and III and assumes an 'L' shape. Domain III is highly mobile and contacts RuvB.</text>
</comment>
<comment type="similarity">
    <text evidence="1">Belongs to the RuvA family.</text>
</comment>
<keyword id="KW-0963">Cytoplasm</keyword>
<keyword id="KW-0227">DNA damage</keyword>
<keyword id="KW-0233">DNA recombination</keyword>
<keyword id="KW-0234">DNA repair</keyword>
<keyword id="KW-0238">DNA-binding</keyword>
<name>RUVA_ACIBY</name>
<evidence type="ECO:0000255" key="1">
    <source>
        <dbReference type="HAMAP-Rule" id="MF_00031"/>
    </source>
</evidence>
<gene>
    <name evidence="1" type="primary">ruvA</name>
    <name type="ordered locus">ABAYE0910</name>
</gene>
<proteinExistence type="inferred from homology"/>
<dbReference type="EMBL" id="CU459141">
    <property type="protein sequence ID" value="CAM85855.1"/>
    <property type="molecule type" value="Genomic_DNA"/>
</dbReference>
<dbReference type="RefSeq" id="WP_000578663.1">
    <property type="nucleotide sequence ID" value="NZ_JBDGFB010000021.1"/>
</dbReference>
<dbReference type="SMR" id="B0VDI6"/>
<dbReference type="EnsemblBacteria" id="CAM85855">
    <property type="protein sequence ID" value="CAM85855"/>
    <property type="gene ID" value="ABAYE0910"/>
</dbReference>
<dbReference type="GeneID" id="92894860"/>
<dbReference type="KEGG" id="aby:ABAYE0910"/>
<dbReference type="HOGENOM" id="CLU_087936_0_0_6"/>
<dbReference type="GO" id="GO:0005737">
    <property type="term" value="C:cytoplasm"/>
    <property type="evidence" value="ECO:0007669"/>
    <property type="project" value="UniProtKB-SubCell"/>
</dbReference>
<dbReference type="GO" id="GO:0009379">
    <property type="term" value="C:Holliday junction helicase complex"/>
    <property type="evidence" value="ECO:0007669"/>
    <property type="project" value="InterPro"/>
</dbReference>
<dbReference type="GO" id="GO:0048476">
    <property type="term" value="C:Holliday junction resolvase complex"/>
    <property type="evidence" value="ECO:0007669"/>
    <property type="project" value="UniProtKB-UniRule"/>
</dbReference>
<dbReference type="GO" id="GO:0005524">
    <property type="term" value="F:ATP binding"/>
    <property type="evidence" value="ECO:0007669"/>
    <property type="project" value="InterPro"/>
</dbReference>
<dbReference type="GO" id="GO:0000400">
    <property type="term" value="F:four-way junction DNA binding"/>
    <property type="evidence" value="ECO:0007669"/>
    <property type="project" value="UniProtKB-UniRule"/>
</dbReference>
<dbReference type="GO" id="GO:0009378">
    <property type="term" value="F:four-way junction helicase activity"/>
    <property type="evidence" value="ECO:0007669"/>
    <property type="project" value="InterPro"/>
</dbReference>
<dbReference type="GO" id="GO:0006310">
    <property type="term" value="P:DNA recombination"/>
    <property type="evidence" value="ECO:0007669"/>
    <property type="project" value="UniProtKB-UniRule"/>
</dbReference>
<dbReference type="GO" id="GO:0006281">
    <property type="term" value="P:DNA repair"/>
    <property type="evidence" value="ECO:0007669"/>
    <property type="project" value="UniProtKB-UniRule"/>
</dbReference>
<dbReference type="Gene3D" id="1.10.150.20">
    <property type="entry name" value="5' to 3' exonuclease, C-terminal subdomain"/>
    <property type="match status" value="1"/>
</dbReference>
<dbReference type="Gene3D" id="1.10.8.10">
    <property type="entry name" value="DNA helicase RuvA subunit, C-terminal domain"/>
    <property type="match status" value="1"/>
</dbReference>
<dbReference type="Gene3D" id="2.40.50.140">
    <property type="entry name" value="Nucleic acid-binding proteins"/>
    <property type="match status" value="1"/>
</dbReference>
<dbReference type="HAMAP" id="MF_00031">
    <property type="entry name" value="DNA_HJ_migration_RuvA"/>
    <property type="match status" value="1"/>
</dbReference>
<dbReference type="InterPro" id="IPR013849">
    <property type="entry name" value="DNA_helicase_Holl-junc_RuvA_I"/>
</dbReference>
<dbReference type="InterPro" id="IPR003583">
    <property type="entry name" value="Hlx-hairpin-Hlx_DNA-bd_motif"/>
</dbReference>
<dbReference type="InterPro" id="IPR012340">
    <property type="entry name" value="NA-bd_OB-fold"/>
</dbReference>
<dbReference type="InterPro" id="IPR000085">
    <property type="entry name" value="RuvA"/>
</dbReference>
<dbReference type="InterPro" id="IPR010994">
    <property type="entry name" value="RuvA_2-like"/>
</dbReference>
<dbReference type="InterPro" id="IPR011114">
    <property type="entry name" value="RuvA_C"/>
</dbReference>
<dbReference type="InterPro" id="IPR036267">
    <property type="entry name" value="RuvA_C_sf"/>
</dbReference>
<dbReference type="NCBIfam" id="TIGR00084">
    <property type="entry name" value="ruvA"/>
    <property type="match status" value="1"/>
</dbReference>
<dbReference type="Pfam" id="PF14520">
    <property type="entry name" value="HHH_5"/>
    <property type="match status" value="1"/>
</dbReference>
<dbReference type="Pfam" id="PF07499">
    <property type="entry name" value="RuvA_C"/>
    <property type="match status" value="1"/>
</dbReference>
<dbReference type="Pfam" id="PF01330">
    <property type="entry name" value="RuvA_N"/>
    <property type="match status" value="1"/>
</dbReference>
<dbReference type="SMART" id="SM00278">
    <property type="entry name" value="HhH1"/>
    <property type="match status" value="2"/>
</dbReference>
<dbReference type="SUPFAM" id="SSF46929">
    <property type="entry name" value="DNA helicase RuvA subunit, C-terminal domain"/>
    <property type="match status" value="1"/>
</dbReference>
<dbReference type="SUPFAM" id="SSF50249">
    <property type="entry name" value="Nucleic acid-binding proteins"/>
    <property type="match status" value="1"/>
</dbReference>
<dbReference type="SUPFAM" id="SSF47781">
    <property type="entry name" value="RuvA domain 2-like"/>
    <property type="match status" value="1"/>
</dbReference>
<protein>
    <recommendedName>
        <fullName evidence="1">Holliday junction branch migration complex subunit RuvA</fullName>
    </recommendedName>
</protein>
<sequence length="199" mass="21527">MIGCLIGEVFALEAPTVLLNVNGVGYEIDTPLSTFCQLQKGQKVTLWTHLVVREDAQQLYGFSDAQEKTIFRTLLKVNGVGPKMALGILSTLSVELLVHTIEHDDVNTLVKVPGVGKKTAERLMIELRDRFKTLAQGTSSAAALPQIQFVSNSPVAEAEAALQSLGYKPLEAQKAVAAVKADYTESADIIRAALKSMMK</sequence>